<organism>
    <name type="scientific">Pseudomonas putida (strain GB-1)</name>
    <dbReference type="NCBI Taxonomy" id="76869"/>
    <lineage>
        <taxon>Bacteria</taxon>
        <taxon>Pseudomonadati</taxon>
        <taxon>Pseudomonadota</taxon>
        <taxon>Gammaproteobacteria</taxon>
        <taxon>Pseudomonadales</taxon>
        <taxon>Pseudomonadaceae</taxon>
        <taxon>Pseudomonas</taxon>
    </lineage>
</organism>
<comment type="function">
    <text evidence="1">Bifunctional enzyme with both catalase and broad-spectrum peroxidase activity.</text>
</comment>
<comment type="catalytic activity">
    <reaction evidence="1">
        <text>H2O2 + AH2 = A + 2 H2O</text>
        <dbReference type="Rhea" id="RHEA:30275"/>
        <dbReference type="ChEBI" id="CHEBI:13193"/>
        <dbReference type="ChEBI" id="CHEBI:15377"/>
        <dbReference type="ChEBI" id="CHEBI:16240"/>
        <dbReference type="ChEBI" id="CHEBI:17499"/>
        <dbReference type="EC" id="1.11.1.21"/>
    </reaction>
</comment>
<comment type="catalytic activity">
    <reaction evidence="1">
        <text>2 H2O2 = O2 + 2 H2O</text>
        <dbReference type="Rhea" id="RHEA:20309"/>
        <dbReference type="ChEBI" id="CHEBI:15377"/>
        <dbReference type="ChEBI" id="CHEBI:15379"/>
        <dbReference type="ChEBI" id="CHEBI:16240"/>
        <dbReference type="EC" id="1.11.1.21"/>
    </reaction>
</comment>
<comment type="cofactor">
    <cofactor evidence="1">
        <name>heme b</name>
        <dbReference type="ChEBI" id="CHEBI:60344"/>
    </cofactor>
    <text evidence="1">Binds 1 heme b (iron(II)-protoporphyrin IX) group per dimer.</text>
</comment>
<comment type="subunit">
    <text evidence="1">Homodimer or homotetramer.</text>
</comment>
<comment type="PTM">
    <text evidence="1">Formation of the three residue Trp-Tyr-Met cross-link is important for the catalase, but not the peroxidase activity of the enzyme.</text>
</comment>
<comment type="similarity">
    <text evidence="1">Belongs to the peroxidase family. Peroxidase/catalase subfamily.</text>
</comment>
<proteinExistence type="inferred from homology"/>
<gene>
    <name evidence="1" type="primary">katG</name>
    <name type="ordered locus">PputGB1_2231</name>
</gene>
<keyword id="KW-0349">Heme</keyword>
<keyword id="KW-0376">Hydrogen peroxide</keyword>
<keyword id="KW-0408">Iron</keyword>
<keyword id="KW-0479">Metal-binding</keyword>
<keyword id="KW-0560">Oxidoreductase</keyword>
<keyword id="KW-0575">Peroxidase</keyword>
<name>KATG_PSEPG</name>
<reference key="1">
    <citation type="submission" date="2008-01" db="EMBL/GenBank/DDBJ databases">
        <title>Complete sequence of Pseudomonas putida GB-1.</title>
        <authorList>
            <consortium name="US DOE Joint Genome Institute"/>
            <person name="Copeland A."/>
            <person name="Lucas S."/>
            <person name="Lapidus A."/>
            <person name="Barry K."/>
            <person name="Glavina del Rio T."/>
            <person name="Dalin E."/>
            <person name="Tice H."/>
            <person name="Pitluck S."/>
            <person name="Bruce D."/>
            <person name="Goodwin L."/>
            <person name="Chertkov O."/>
            <person name="Brettin T."/>
            <person name="Detter J.C."/>
            <person name="Han C."/>
            <person name="Kuske C.R."/>
            <person name="Schmutz J."/>
            <person name="Larimer F."/>
            <person name="Land M."/>
            <person name="Hauser L."/>
            <person name="Kyrpides N."/>
            <person name="Kim E."/>
            <person name="McCarthy J.K."/>
            <person name="Richardson P."/>
        </authorList>
    </citation>
    <scope>NUCLEOTIDE SEQUENCE [LARGE SCALE GENOMIC DNA]</scope>
    <source>
        <strain>GB-1</strain>
    </source>
</reference>
<evidence type="ECO:0000255" key="1">
    <source>
        <dbReference type="HAMAP-Rule" id="MF_01961"/>
    </source>
</evidence>
<evidence type="ECO:0000256" key="2">
    <source>
        <dbReference type="SAM" id="MobiDB-lite"/>
    </source>
</evidence>
<feature type="chain" id="PRO_0000354867" description="Catalase-peroxidase">
    <location>
        <begin position="1"/>
        <end position="751"/>
    </location>
</feature>
<feature type="region of interest" description="Disordered" evidence="2">
    <location>
        <begin position="1"/>
        <end position="21"/>
    </location>
</feature>
<feature type="region of interest" description="Disordered" evidence="2">
    <location>
        <begin position="365"/>
        <end position="390"/>
    </location>
</feature>
<feature type="active site" description="Proton acceptor" evidence="1">
    <location>
        <position position="91"/>
    </location>
</feature>
<feature type="binding site" description="axial binding residue" evidence="1">
    <location>
        <position position="285"/>
    </location>
    <ligand>
        <name>heme b</name>
        <dbReference type="ChEBI" id="CHEBI:60344"/>
    </ligand>
    <ligandPart>
        <name>Fe</name>
        <dbReference type="ChEBI" id="CHEBI:18248"/>
    </ligandPart>
</feature>
<feature type="site" description="Transition state stabilizer" evidence="1">
    <location>
        <position position="87"/>
    </location>
</feature>
<feature type="cross-link" description="Tryptophyl-tyrosyl-methioninium (Trp-Tyr) (with M-270)" evidence="1">
    <location>
        <begin position="90"/>
        <end position="244"/>
    </location>
</feature>
<feature type="cross-link" description="Tryptophyl-tyrosyl-methioninium (Tyr-Met) (with W-90)" evidence="1">
    <location>
        <begin position="244"/>
        <end position="270"/>
    </location>
</feature>
<sequence length="751" mass="81701">MSNESKCPFHQTAGGGTTNRDWWPDQLNLRILHQHSSKSSPDPDFDYAKAFKSLDFQALKKDLTALMTDSQDWWPADFGHYGPLFIRMAWHSAGTYRIGDGRGGAGSGQQRFAPLNSWPDNVSLDKARRLLWPIKQKYGNKISWADLIVLTGNVALESMGFKTFGFSGGRADVWEPDEDVYWGSEKVWLGGDTRYGKDQLKAQAPGQGDLVAEPAKHGEEQNRDLSAERNLENPLAAVQMGLIYVNPEGPEGNPDPVASGKDIRETFGRMAMNDEETVALIAGGHAFGKTHGAGPADNVGPEPEAAGLELQGLGWANKFGTGKGGDAITSGLEVIWTSTPTKWSNEYLNNLFNFEWELTKSPAGAHQWRPKEGKGAGTVPDAHDPGKKHAPSMLTSDLALRFDPIYEPIARRFKDNPDQLADAFARAWYKLIHRDMGPLARYLGPEMPNEELLWQDPLPKADPSTIGEQDIAALKAKVLASGLSVGELVSTAWASASTFRGSDKRGGANGARLRLAPQKGWAANQGVDKVLAALEKIQGEFNNGGKKISLADLIVLAGTAAVEKAAKDAGYSGSVGFRPGRVDASEAQTDVESFAVLEPLADGFRNFSKARYSVKAEKLLLDKAQLLTLTAPELTVLVGGLRVLGANHGGSKLGVFTDKPGTLSNDFFRNLLDMSVEWKPTSADNETFEGRDRKTGQVKWSGSRVDLVFGSHAQLRALSEVYGSSDGADKFVRDFVAAWQKVMELDRFDLK</sequence>
<dbReference type="EC" id="1.11.1.21" evidence="1"/>
<dbReference type="EMBL" id="CP000926">
    <property type="protein sequence ID" value="ABY98132.1"/>
    <property type="molecule type" value="Genomic_DNA"/>
</dbReference>
<dbReference type="RefSeq" id="WP_012271880.1">
    <property type="nucleotide sequence ID" value="NC_010322.1"/>
</dbReference>
<dbReference type="SMR" id="B0KNK9"/>
<dbReference type="KEGG" id="ppg:PputGB1_2231"/>
<dbReference type="eggNOG" id="COG0376">
    <property type="taxonomic scope" value="Bacteria"/>
</dbReference>
<dbReference type="HOGENOM" id="CLU_025424_2_0_6"/>
<dbReference type="Proteomes" id="UP000002157">
    <property type="component" value="Chromosome"/>
</dbReference>
<dbReference type="GO" id="GO:0005829">
    <property type="term" value="C:cytosol"/>
    <property type="evidence" value="ECO:0007669"/>
    <property type="project" value="TreeGrafter"/>
</dbReference>
<dbReference type="GO" id="GO:0004096">
    <property type="term" value="F:catalase activity"/>
    <property type="evidence" value="ECO:0007669"/>
    <property type="project" value="UniProtKB-UniRule"/>
</dbReference>
<dbReference type="GO" id="GO:0020037">
    <property type="term" value="F:heme binding"/>
    <property type="evidence" value="ECO:0007669"/>
    <property type="project" value="InterPro"/>
</dbReference>
<dbReference type="GO" id="GO:0046872">
    <property type="term" value="F:metal ion binding"/>
    <property type="evidence" value="ECO:0007669"/>
    <property type="project" value="UniProtKB-KW"/>
</dbReference>
<dbReference type="GO" id="GO:0070301">
    <property type="term" value="P:cellular response to hydrogen peroxide"/>
    <property type="evidence" value="ECO:0007669"/>
    <property type="project" value="TreeGrafter"/>
</dbReference>
<dbReference type="GO" id="GO:0042744">
    <property type="term" value="P:hydrogen peroxide catabolic process"/>
    <property type="evidence" value="ECO:0007669"/>
    <property type="project" value="UniProtKB-KW"/>
</dbReference>
<dbReference type="CDD" id="cd00649">
    <property type="entry name" value="catalase_peroxidase_1"/>
    <property type="match status" value="1"/>
</dbReference>
<dbReference type="CDD" id="cd08200">
    <property type="entry name" value="catalase_peroxidase_2"/>
    <property type="match status" value="1"/>
</dbReference>
<dbReference type="FunFam" id="1.10.420.10:FF:000004">
    <property type="entry name" value="Catalase-peroxidase"/>
    <property type="match status" value="1"/>
</dbReference>
<dbReference type="FunFam" id="1.10.520.10:FF:000002">
    <property type="entry name" value="Catalase-peroxidase"/>
    <property type="match status" value="1"/>
</dbReference>
<dbReference type="Gene3D" id="1.10.520.10">
    <property type="match status" value="2"/>
</dbReference>
<dbReference type="Gene3D" id="1.10.420.10">
    <property type="entry name" value="Peroxidase, domain 2"/>
    <property type="match status" value="2"/>
</dbReference>
<dbReference type="HAMAP" id="MF_01961">
    <property type="entry name" value="Catal_peroxid"/>
    <property type="match status" value="1"/>
</dbReference>
<dbReference type="InterPro" id="IPR000763">
    <property type="entry name" value="Catalase_peroxidase"/>
</dbReference>
<dbReference type="InterPro" id="IPR002016">
    <property type="entry name" value="Haem_peroxidase"/>
</dbReference>
<dbReference type="InterPro" id="IPR010255">
    <property type="entry name" value="Haem_peroxidase_sf"/>
</dbReference>
<dbReference type="InterPro" id="IPR019794">
    <property type="entry name" value="Peroxidases_AS"/>
</dbReference>
<dbReference type="InterPro" id="IPR019793">
    <property type="entry name" value="Peroxidases_heam-ligand_BS"/>
</dbReference>
<dbReference type="NCBIfam" id="TIGR00198">
    <property type="entry name" value="cat_per_HPI"/>
    <property type="match status" value="1"/>
</dbReference>
<dbReference type="NCBIfam" id="NF011635">
    <property type="entry name" value="PRK15061.1"/>
    <property type="match status" value="1"/>
</dbReference>
<dbReference type="PANTHER" id="PTHR30555:SF0">
    <property type="entry name" value="CATALASE-PEROXIDASE"/>
    <property type="match status" value="1"/>
</dbReference>
<dbReference type="PANTHER" id="PTHR30555">
    <property type="entry name" value="HYDROPEROXIDASE I, BIFUNCTIONAL CATALASE-PEROXIDASE"/>
    <property type="match status" value="1"/>
</dbReference>
<dbReference type="Pfam" id="PF00141">
    <property type="entry name" value="peroxidase"/>
    <property type="match status" value="2"/>
</dbReference>
<dbReference type="PRINTS" id="PR00460">
    <property type="entry name" value="BPEROXIDASE"/>
</dbReference>
<dbReference type="PRINTS" id="PR00458">
    <property type="entry name" value="PEROXIDASE"/>
</dbReference>
<dbReference type="SUPFAM" id="SSF48113">
    <property type="entry name" value="Heme-dependent peroxidases"/>
    <property type="match status" value="2"/>
</dbReference>
<dbReference type="PROSITE" id="PS00435">
    <property type="entry name" value="PEROXIDASE_1"/>
    <property type="match status" value="1"/>
</dbReference>
<dbReference type="PROSITE" id="PS00436">
    <property type="entry name" value="PEROXIDASE_2"/>
    <property type="match status" value="1"/>
</dbReference>
<dbReference type="PROSITE" id="PS50873">
    <property type="entry name" value="PEROXIDASE_4"/>
    <property type="match status" value="1"/>
</dbReference>
<protein>
    <recommendedName>
        <fullName evidence="1">Catalase-peroxidase</fullName>
        <shortName evidence="1">CP</shortName>
        <ecNumber evidence="1">1.11.1.21</ecNumber>
    </recommendedName>
    <alternativeName>
        <fullName evidence="1">Peroxidase/catalase</fullName>
    </alternativeName>
</protein>
<accession>B0KNK9</accession>